<evidence type="ECO:0000250" key="1">
    <source>
        <dbReference type="UniProtKB" id="P02070"/>
    </source>
</evidence>
<evidence type="ECO:0000250" key="2">
    <source>
        <dbReference type="UniProtKB" id="P02086"/>
    </source>
</evidence>
<evidence type="ECO:0000250" key="3">
    <source>
        <dbReference type="UniProtKB" id="P68871"/>
    </source>
</evidence>
<evidence type="ECO:0000255" key="4">
    <source>
        <dbReference type="PROSITE-ProRule" id="PRU00238"/>
    </source>
</evidence>
<evidence type="ECO:0000269" key="5">
    <source>
    </source>
</evidence>
<evidence type="ECO:0000303" key="6">
    <source>
    </source>
</evidence>
<evidence type="ECO:0000305" key="7"/>
<feature type="chain" id="PRO_0000415596" description="Hemoglobin subunit beta">
    <location>
        <begin position="1"/>
        <end position="146"/>
    </location>
</feature>
<feature type="domain" description="Globin" evidence="4">
    <location>
        <begin position="2"/>
        <end position="146"/>
    </location>
</feature>
<feature type="binding site" description="distal binding residue" evidence="1 4">
    <location>
        <position position="63"/>
    </location>
    <ligand>
        <name>heme b</name>
        <dbReference type="ChEBI" id="CHEBI:60344"/>
    </ligand>
    <ligandPart>
        <name>Fe</name>
        <dbReference type="ChEBI" id="CHEBI:18248"/>
    </ligandPart>
</feature>
<feature type="binding site" description="proximal binding residue" evidence="1 4">
    <location>
        <position position="92"/>
    </location>
    <ligand>
        <name>heme b</name>
        <dbReference type="ChEBI" id="CHEBI:60344"/>
    </ligand>
    <ligandPart>
        <name>Fe</name>
        <dbReference type="ChEBI" id="CHEBI:18248"/>
    </ligandPart>
</feature>
<feature type="modified residue" description="N-acetylvaline" evidence="2">
    <location>
        <position position="1"/>
    </location>
</feature>
<feature type="modified residue" description="Phosphothreonine" evidence="3">
    <location>
        <position position="12"/>
    </location>
</feature>
<feature type="modified residue" description="Phosphoserine" evidence="3">
    <location>
        <position position="44"/>
    </location>
</feature>
<feature type="modified residue" description="N6-acetyllysine" evidence="3">
    <location>
        <position position="59"/>
    </location>
</feature>
<feature type="modified residue" description="N6-acetyllysine" evidence="3">
    <location>
        <position position="82"/>
    </location>
</feature>
<feature type="modified residue" description="S-nitrosocysteine" evidence="3">
    <location>
        <position position="93"/>
    </location>
</feature>
<feature type="modified residue" description="N6-acetyllysine" evidence="3">
    <location>
        <position position="144"/>
    </location>
</feature>
<feature type="unsure residue" description="L or I" evidence="5">
    <location>
        <position position="3"/>
    </location>
</feature>
<feature type="unsure residue" description="L or I" evidence="5">
    <location>
        <position position="10"/>
    </location>
</feature>
<feature type="unsure residue" description="L or I" evidence="5">
    <location>
        <position position="14"/>
    </location>
</feature>
<feature type="unsure residue" description="L or I" evidence="5">
    <location>
        <position position="23"/>
    </location>
</feature>
<feature type="unsure residue" description="L or I" evidence="5">
    <location>
        <position position="28"/>
    </location>
</feature>
<feature type="unsure residue" description="L or I" evidence="5">
    <location>
        <position position="31"/>
    </location>
</feature>
<feature type="unsure residue" description="L or I" evidence="5">
    <location>
        <position position="32"/>
    </location>
</feature>
<feature type="unsure residue" description="L or I" evidence="5">
    <location>
        <position position="48"/>
    </location>
</feature>
<feature type="unsure residue" description="L or I" evidence="5">
    <location>
        <position position="54"/>
    </location>
</feature>
<feature type="unsure residue" description="L or I" evidence="5">
    <location>
        <position position="68"/>
    </location>
</feature>
<feature type="unsure residue" description="L or I" evidence="5">
    <location>
        <position position="75"/>
    </location>
</feature>
<feature type="unsure residue" description="L or I" evidence="5">
    <location>
        <position position="78"/>
    </location>
</feature>
<feature type="unsure residue" description="L or I" evidence="5">
    <location>
        <position position="81"/>
    </location>
</feature>
<feature type="unsure residue" description="L or I" evidence="5">
    <location>
        <position position="88"/>
    </location>
</feature>
<feature type="unsure residue" description="L or I" evidence="5">
    <location>
        <position position="91"/>
    </location>
</feature>
<feature type="unsure residue" description="L or I" evidence="5">
    <location>
        <position position="96"/>
    </location>
</feature>
<feature type="unsure residue" description="L or I" evidence="5">
    <location>
        <position position="105"/>
    </location>
</feature>
<feature type="unsure residue" description="L or I" evidence="5">
    <location>
        <position position="106"/>
    </location>
</feature>
<feature type="unsure residue" description="L or I" evidence="5">
    <location>
        <position position="110"/>
    </location>
</feature>
<feature type="unsure residue" description="L or I" evidence="5">
    <location>
        <position position="112"/>
    </location>
</feature>
<feature type="unsure residue" description="L or I" evidence="5">
    <location>
        <position position="118"/>
    </location>
</feature>
<feature type="unsure residue" description="L or I" evidence="5">
    <location>
        <position position="141"/>
    </location>
</feature>
<keyword id="KW-0007">Acetylation</keyword>
<keyword id="KW-0903">Direct protein sequencing</keyword>
<keyword id="KW-0349">Heme</keyword>
<keyword id="KW-0408">Iron</keyword>
<keyword id="KW-0479">Metal-binding</keyword>
<keyword id="KW-0561">Oxygen transport</keyword>
<keyword id="KW-0597">Phosphoprotein</keyword>
<keyword id="KW-0702">S-nitrosylation</keyword>
<keyword id="KW-0813">Transport</keyword>
<name>HBB_PERCR</name>
<accession>B3EWD4</accession>
<reference evidence="7" key="1">
    <citation type="journal article" date="2012" name="Biol. Chem.">
        <title>Development of a host blood meal database: de novo sequencing of hemoglobin from nine small mammals using mass spectrometry.</title>
        <authorList>
            <person name="Laskay U.A."/>
            <person name="Burg J."/>
            <person name="Kaleta E.J."/>
            <person name="Vilcins I.M."/>
            <person name="Telford Iii S.R."/>
            <person name="Barbour A.G."/>
            <person name="Wysocki V.H."/>
        </authorList>
    </citation>
    <scope>PROTEIN SEQUENCE</scope>
    <source>
        <tissue evidence="5">Erythrocyte</tissue>
    </source>
</reference>
<sequence length="146" mass="15807">VHLTDAEKALVTGLWGKVKPDELGGEALGRLLGVYPWTQRFFDSFGDLSSASALMSNAKVKAHGKKVLDSFSEGLKHLDNLKGTFASLSELHCDKLHVDPENFKLLGNMLVLVMAHHLGKDFTPAAQAAYQKVVAGVATALAHKYH</sequence>
<comment type="function">
    <text evidence="7">Involved in oxygen transport from the lung to the various peripheral tissues.</text>
</comment>
<comment type="subunit">
    <text evidence="7">Heterotetramer of two alpha chains and two beta chains.</text>
</comment>
<comment type="tissue specificity">
    <text evidence="7">Red blood cells.</text>
</comment>
<comment type="similarity">
    <text evidence="4">Belongs to the globin family.</text>
</comment>
<protein>
    <recommendedName>
        <fullName evidence="6">Hemoglobin subunit beta</fullName>
    </recommendedName>
</protein>
<dbReference type="SMR" id="B3EWD4"/>
<dbReference type="GO" id="GO:0072562">
    <property type="term" value="C:blood microparticle"/>
    <property type="evidence" value="ECO:0007669"/>
    <property type="project" value="TreeGrafter"/>
</dbReference>
<dbReference type="GO" id="GO:0031838">
    <property type="term" value="C:haptoglobin-hemoglobin complex"/>
    <property type="evidence" value="ECO:0007669"/>
    <property type="project" value="TreeGrafter"/>
</dbReference>
<dbReference type="GO" id="GO:0005833">
    <property type="term" value="C:hemoglobin complex"/>
    <property type="evidence" value="ECO:0007669"/>
    <property type="project" value="InterPro"/>
</dbReference>
<dbReference type="GO" id="GO:0031720">
    <property type="term" value="F:haptoglobin binding"/>
    <property type="evidence" value="ECO:0007669"/>
    <property type="project" value="TreeGrafter"/>
</dbReference>
<dbReference type="GO" id="GO:0020037">
    <property type="term" value="F:heme binding"/>
    <property type="evidence" value="ECO:0007669"/>
    <property type="project" value="InterPro"/>
</dbReference>
<dbReference type="GO" id="GO:0031721">
    <property type="term" value="F:hemoglobin alpha binding"/>
    <property type="evidence" value="ECO:0007669"/>
    <property type="project" value="TreeGrafter"/>
</dbReference>
<dbReference type="GO" id="GO:0046872">
    <property type="term" value="F:metal ion binding"/>
    <property type="evidence" value="ECO:0007669"/>
    <property type="project" value="UniProtKB-KW"/>
</dbReference>
<dbReference type="GO" id="GO:0043177">
    <property type="term" value="F:organic acid binding"/>
    <property type="evidence" value="ECO:0007669"/>
    <property type="project" value="TreeGrafter"/>
</dbReference>
<dbReference type="GO" id="GO:0019825">
    <property type="term" value="F:oxygen binding"/>
    <property type="evidence" value="ECO:0007669"/>
    <property type="project" value="InterPro"/>
</dbReference>
<dbReference type="GO" id="GO:0005344">
    <property type="term" value="F:oxygen carrier activity"/>
    <property type="evidence" value="ECO:0007669"/>
    <property type="project" value="UniProtKB-KW"/>
</dbReference>
<dbReference type="GO" id="GO:0004601">
    <property type="term" value="F:peroxidase activity"/>
    <property type="evidence" value="ECO:0007669"/>
    <property type="project" value="TreeGrafter"/>
</dbReference>
<dbReference type="GO" id="GO:0042744">
    <property type="term" value="P:hydrogen peroxide catabolic process"/>
    <property type="evidence" value="ECO:0007669"/>
    <property type="project" value="TreeGrafter"/>
</dbReference>
<dbReference type="CDD" id="cd08925">
    <property type="entry name" value="Hb-beta-like"/>
    <property type="match status" value="1"/>
</dbReference>
<dbReference type="FunFam" id="1.10.490.10:FF:000001">
    <property type="entry name" value="Hemoglobin subunit beta"/>
    <property type="match status" value="1"/>
</dbReference>
<dbReference type="Gene3D" id="1.10.490.10">
    <property type="entry name" value="Globins"/>
    <property type="match status" value="1"/>
</dbReference>
<dbReference type="InterPro" id="IPR000971">
    <property type="entry name" value="Globin"/>
</dbReference>
<dbReference type="InterPro" id="IPR009050">
    <property type="entry name" value="Globin-like_sf"/>
</dbReference>
<dbReference type="InterPro" id="IPR012292">
    <property type="entry name" value="Globin/Proto"/>
</dbReference>
<dbReference type="InterPro" id="IPR002337">
    <property type="entry name" value="Hemoglobin_b"/>
</dbReference>
<dbReference type="InterPro" id="IPR050056">
    <property type="entry name" value="Hemoglobin_oxygen_transport"/>
</dbReference>
<dbReference type="PANTHER" id="PTHR11442">
    <property type="entry name" value="HEMOGLOBIN FAMILY MEMBER"/>
    <property type="match status" value="1"/>
</dbReference>
<dbReference type="PANTHER" id="PTHR11442:SF42">
    <property type="entry name" value="HEMOGLOBIN SUBUNIT BETA"/>
    <property type="match status" value="1"/>
</dbReference>
<dbReference type="Pfam" id="PF00042">
    <property type="entry name" value="Globin"/>
    <property type="match status" value="1"/>
</dbReference>
<dbReference type="PRINTS" id="PR00814">
    <property type="entry name" value="BETAHAEM"/>
</dbReference>
<dbReference type="SUPFAM" id="SSF46458">
    <property type="entry name" value="Globin-like"/>
    <property type="match status" value="1"/>
</dbReference>
<dbReference type="PROSITE" id="PS01033">
    <property type="entry name" value="GLOBIN"/>
    <property type="match status" value="1"/>
</dbReference>
<proteinExistence type="evidence at protein level"/>
<organism>
    <name type="scientific">Peromyscus crinitus</name>
    <name type="common">Canyon mouse</name>
    <dbReference type="NCBI Taxonomy" id="144753"/>
    <lineage>
        <taxon>Eukaryota</taxon>
        <taxon>Metazoa</taxon>
        <taxon>Chordata</taxon>
        <taxon>Craniata</taxon>
        <taxon>Vertebrata</taxon>
        <taxon>Euteleostomi</taxon>
        <taxon>Mammalia</taxon>
        <taxon>Eutheria</taxon>
        <taxon>Euarchontoglires</taxon>
        <taxon>Glires</taxon>
        <taxon>Rodentia</taxon>
        <taxon>Myomorpha</taxon>
        <taxon>Muroidea</taxon>
        <taxon>Cricetidae</taxon>
        <taxon>Neotominae</taxon>
        <taxon>Peromyscus</taxon>
    </lineage>
</organism>